<gene>
    <name evidence="1" type="primary">dsbB</name>
    <name type="ordered locus">SPA1066</name>
</gene>
<accession>Q5PCR9</accession>
<feature type="chain" id="PRO_0000298405" description="Disulfide bond formation protein B">
    <location>
        <begin position="1"/>
        <end position="176"/>
    </location>
</feature>
<feature type="topological domain" description="Cytoplasmic" evidence="1">
    <location>
        <begin position="1"/>
        <end position="14"/>
    </location>
</feature>
<feature type="transmembrane region" description="Helical" evidence="1">
    <location>
        <begin position="15"/>
        <end position="31"/>
    </location>
</feature>
<feature type="topological domain" description="Periplasmic" evidence="1">
    <location>
        <begin position="32"/>
        <end position="49"/>
    </location>
</feature>
<feature type="transmembrane region" description="Helical" evidence="1">
    <location>
        <begin position="50"/>
        <end position="65"/>
    </location>
</feature>
<feature type="topological domain" description="Cytoplasmic" evidence="1">
    <location>
        <begin position="66"/>
        <end position="71"/>
    </location>
</feature>
<feature type="transmembrane region" description="Helical" evidence="1">
    <location>
        <begin position="72"/>
        <end position="89"/>
    </location>
</feature>
<feature type="topological domain" description="Periplasmic" evidence="1">
    <location>
        <begin position="90"/>
        <end position="144"/>
    </location>
</feature>
<feature type="transmembrane region" description="Helical" evidence="1">
    <location>
        <begin position="145"/>
        <end position="163"/>
    </location>
</feature>
<feature type="topological domain" description="Cytoplasmic" evidence="1">
    <location>
        <begin position="164"/>
        <end position="176"/>
    </location>
</feature>
<feature type="disulfide bond" description="Redox-active" evidence="1">
    <location>
        <begin position="41"/>
        <end position="44"/>
    </location>
</feature>
<feature type="disulfide bond" description="Redox-active" evidence="1">
    <location>
        <begin position="104"/>
        <end position="130"/>
    </location>
</feature>
<organism>
    <name type="scientific">Salmonella paratyphi A (strain ATCC 9150 / SARB42)</name>
    <dbReference type="NCBI Taxonomy" id="295319"/>
    <lineage>
        <taxon>Bacteria</taxon>
        <taxon>Pseudomonadati</taxon>
        <taxon>Pseudomonadota</taxon>
        <taxon>Gammaproteobacteria</taxon>
        <taxon>Enterobacterales</taxon>
        <taxon>Enterobacteriaceae</taxon>
        <taxon>Salmonella</taxon>
    </lineage>
</organism>
<reference key="1">
    <citation type="journal article" date="2004" name="Nat. Genet.">
        <title>Comparison of genome degradation in Paratyphi A and Typhi, human-restricted serovars of Salmonella enterica that cause typhoid.</title>
        <authorList>
            <person name="McClelland M."/>
            <person name="Sanderson K.E."/>
            <person name="Clifton S.W."/>
            <person name="Latreille P."/>
            <person name="Porwollik S."/>
            <person name="Sabo A."/>
            <person name="Meyer R."/>
            <person name="Bieri T."/>
            <person name="Ozersky P."/>
            <person name="McLellan M."/>
            <person name="Harkins C.R."/>
            <person name="Wang C."/>
            <person name="Nguyen C."/>
            <person name="Berghoff A."/>
            <person name="Elliott G."/>
            <person name="Kohlberg S."/>
            <person name="Strong C."/>
            <person name="Du F."/>
            <person name="Carter J."/>
            <person name="Kremizki C."/>
            <person name="Layman D."/>
            <person name="Leonard S."/>
            <person name="Sun H."/>
            <person name="Fulton L."/>
            <person name="Nash W."/>
            <person name="Miner T."/>
            <person name="Minx P."/>
            <person name="Delehaunty K."/>
            <person name="Fronick C."/>
            <person name="Magrini V."/>
            <person name="Nhan M."/>
            <person name="Warren W."/>
            <person name="Florea L."/>
            <person name="Spieth J."/>
            <person name="Wilson R.K."/>
        </authorList>
    </citation>
    <scope>NUCLEOTIDE SEQUENCE [LARGE SCALE GENOMIC DNA]</scope>
    <source>
        <strain>ATCC 9150 / SARB42</strain>
    </source>
</reference>
<protein>
    <recommendedName>
        <fullName evidence="1">Disulfide bond formation protein B</fullName>
    </recommendedName>
    <alternativeName>
        <fullName evidence="1">Disulfide oxidoreductase</fullName>
    </alternativeName>
</protein>
<name>DSBB_SALPA</name>
<evidence type="ECO:0000255" key="1">
    <source>
        <dbReference type="HAMAP-Rule" id="MF_00286"/>
    </source>
</evidence>
<keyword id="KW-0997">Cell inner membrane</keyword>
<keyword id="KW-1003">Cell membrane</keyword>
<keyword id="KW-0143">Chaperone</keyword>
<keyword id="KW-1015">Disulfide bond</keyword>
<keyword id="KW-0249">Electron transport</keyword>
<keyword id="KW-0472">Membrane</keyword>
<keyword id="KW-0560">Oxidoreductase</keyword>
<keyword id="KW-0676">Redox-active center</keyword>
<keyword id="KW-0812">Transmembrane</keyword>
<keyword id="KW-1133">Transmembrane helix</keyword>
<keyword id="KW-0813">Transport</keyword>
<comment type="function">
    <text evidence="1">Required for disulfide bond formation in some periplasmic proteins. Acts by oxidizing the DsbA protein.</text>
</comment>
<comment type="subcellular location">
    <subcellularLocation>
        <location evidence="1">Cell inner membrane</location>
        <topology evidence="1">Multi-pass membrane protein</topology>
    </subcellularLocation>
</comment>
<comment type="similarity">
    <text evidence="1">Belongs to the DsbB family.</text>
</comment>
<dbReference type="EMBL" id="CP000026">
    <property type="protein sequence ID" value="AAV77037.1"/>
    <property type="molecule type" value="Genomic_DNA"/>
</dbReference>
<dbReference type="RefSeq" id="WP_000943475.1">
    <property type="nucleotide sequence ID" value="NC_006511.1"/>
</dbReference>
<dbReference type="SMR" id="Q5PCR9"/>
<dbReference type="KEGG" id="spt:SPA1066"/>
<dbReference type="HOGENOM" id="CLU_098660_2_0_6"/>
<dbReference type="Proteomes" id="UP000008185">
    <property type="component" value="Chromosome"/>
</dbReference>
<dbReference type="GO" id="GO:0005886">
    <property type="term" value="C:plasma membrane"/>
    <property type="evidence" value="ECO:0007669"/>
    <property type="project" value="UniProtKB-SubCell"/>
</dbReference>
<dbReference type="GO" id="GO:0009055">
    <property type="term" value="F:electron transfer activity"/>
    <property type="evidence" value="ECO:0007669"/>
    <property type="project" value="UniProtKB-UniRule"/>
</dbReference>
<dbReference type="GO" id="GO:0015035">
    <property type="term" value="F:protein-disulfide reductase activity"/>
    <property type="evidence" value="ECO:0007669"/>
    <property type="project" value="UniProtKB-UniRule"/>
</dbReference>
<dbReference type="GO" id="GO:0006457">
    <property type="term" value="P:protein folding"/>
    <property type="evidence" value="ECO:0007669"/>
    <property type="project" value="InterPro"/>
</dbReference>
<dbReference type="FunFam" id="1.20.1550.10:FF:000001">
    <property type="entry name" value="Disulfide bond formation protein B"/>
    <property type="match status" value="1"/>
</dbReference>
<dbReference type="Gene3D" id="1.20.1550.10">
    <property type="entry name" value="DsbB-like"/>
    <property type="match status" value="1"/>
</dbReference>
<dbReference type="HAMAP" id="MF_00286">
    <property type="entry name" value="DsbB"/>
    <property type="match status" value="1"/>
</dbReference>
<dbReference type="InterPro" id="IPR003752">
    <property type="entry name" value="DiS_bond_form_DsbB/BdbC"/>
</dbReference>
<dbReference type="InterPro" id="IPR022920">
    <property type="entry name" value="Disulphide_bond_form_DsbB"/>
</dbReference>
<dbReference type="InterPro" id="IPR050183">
    <property type="entry name" value="DsbB"/>
</dbReference>
<dbReference type="InterPro" id="IPR023380">
    <property type="entry name" value="DsbB-like_sf"/>
</dbReference>
<dbReference type="NCBIfam" id="NF002485">
    <property type="entry name" value="PRK01749.1"/>
    <property type="match status" value="1"/>
</dbReference>
<dbReference type="PANTHER" id="PTHR36570">
    <property type="entry name" value="DISULFIDE BOND FORMATION PROTEIN B"/>
    <property type="match status" value="1"/>
</dbReference>
<dbReference type="PANTHER" id="PTHR36570:SF2">
    <property type="entry name" value="DISULFIDE BOND FORMATION PROTEIN B"/>
    <property type="match status" value="1"/>
</dbReference>
<dbReference type="Pfam" id="PF02600">
    <property type="entry name" value="DsbB"/>
    <property type="match status" value="1"/>
</dbReference>
<dbReference type="SUPFAM" id="SSF158442">
    <property type="entry name" value="DsbB-like"/>
    <property type="match status" value="1"/>
</dbReference>
<proteinExistence type="inferred from homology"/>
<sequence>MLRFLNQCSRGRGAWLLMAFTALALEMVALWFQHVMLLKPCVLCIYERCALFGVMGAGLVGAIAPKTPLRYVAMVIWIYSAWRGLQLAYEHTMIQLHPSPFMTCDFMARFPDWLPLGKWLPQVFVASGDCAERQWSFLTLEMPQWLLGIFAAYLVVAIAVVIAQAFKPKKRDLFGR</sequence>